<reference key="1">
    <citation type="journal article" date="2007" name="Nature">
        <title>Evolution of genes and genomes on the Drosophila phylogeny.</title>
        <authorList>
            <consortium name="Drosophila 12 genomes consortium"/>
        </authorList>
    </citation>
    <scope>NUCLEOTIDE SEQUENCE [LARGE SCALE GENOMIC DNA]</scope>
    <source>
        <strain>Tucson 14030-0811.24</strain>
    </source>
</reference>
<dbReference type="EC" id="3.6.-.-" evidence="1"/>
<dbReference type="EMBL" id="CH964154">
    <property type="protein sequence ID" value="EDW79834.1"/>
    <property type="molecule type" value="Genomic_DNA"/>
</dbReference>
<dbReference type="SMR" id="B4N645"/>
<dbReference type="STRING" id="7260.B4N645"/>
<dbReference type="EnsemblMetazoa" id="FBtr0248456">
    <property type="protein sequence ID" value="FBpp0246948"/>
    <property type="gene ID" value="FBgn0219804"/>
</dbReference>
<dbReference type="EnsemblMetazoa" id="XM_002068812.4">
    <property type="protein sequence ID" value="XP_002068848.1"/>
    <property type="gene ID" value="LOC6646092"/>
</dbReference>
<dbReference type="GeneID" id="6646092"/>
<dbReference type="KEGG" id="dwi:6646092"/>
<dbReference type="eggNOG" id="KOG2825">
    <property type="taxonomic scope" value="Eukaryota"/>
</dbReference>
<dbReference type="HOGENOM" id="CLU_040761_0_0_1"/>
<dbReference type="OMA" id="MDAPYEF"/>
<dbReference type="OrthoDB" id="1770at2759"/>
<dbReference type="PhylomeDB" id="B4N645"/>
<dbReference type="Proteomes" id="UP000007798">
    <property type="component" value="Unassembled WGS sequence"/>
</dbReference>
<dbReference type="GO" id="GO:0043529">
    <property type="term" value="C:GET complex"/>
    <property type="evidence" value="ECO:0007669"/>
    <property type="project" value="TreeGrafter"/>
</dbReference>
<dbReference type="GO" id="GO:0005524">
    <property type="term" value="F:ATP binding"/>
    <property type="evidence" value="ECO:0007669"/>
    <property type="project" value="UniProtKB-UniRule"/>
</dbReference>
<dbReference type="GO" id="GO:0016887">
    <property type="term" value="F:ATP hydrolysis activity"/>
    <property type="evidence" value="ECO:0007669"/>
    <property type="project" value="InterPro"/>
</dbReference>
<dbReference type="GO" id="GO:0046872">
    <property type="term" value="F:metal ion binding"/>
    <property type="evidence" value="ECO:0007669"/>
    <property type="project" value="UniProtKB-KW"/>
</dbReference>
<dbReference type="GO" id="GO:0071816">
    <property type="term" value="P:tail-anchored membrane protein insertion into ER membrane"/>
    <property type="evidence" value="ECO:0007669"/>
    <property type="project" value="TreeGrafter"/>
</dbReference>
<dbReference type="CDD" id="cd02035">
    <property type="entry name" value="ArsA"/>
    <property type="match status" value="1"/>
</dbReference>
<dbReference type="FunFam" id="3.40.50.300:FF:000235">
    <property type="entry name" value="ATPase ASNA1"/>
    <property type="match status" value="1"/>
</dbReference>
<dbReference type="Gene3D" id="3.40.50.300">
    <property type="entry name" value="P-loop containing nucleotide triphosphate hydrolases"/>
    <property type="match status" value="1"/>
</dbReference>
<dbReference type="HAMAP" id="MF_03112">
    <property type="entry name" value="Asna1_Get3"/>
    <property type="match status" value="1"/>
</dbReference>
<dbReference type="InterPro" id="IPR025723">
    <property type="entry name" value="Anion-transp_ATPase-like_dom"/>
</dbReference>
<dbReference type="InterPro" id="IPR016300">
    <property type="entry name" value="ATPase_ArsA/GET3"/>
</dbReference>
<dbReference type="InterPro" id="IPR027542">
    <property type="entry name" value="ATPase_ArsA/GET3_euk"/>
</dbReference>
<dbReference type="InterPro" id="IPR027417">
    <property type="entry name" value="P-loop_NTPase"/>
</dbReference>
<dbReference type="NCBIfam" id="TIGR00345">
    <property type="entry name" value="GET3_arsA_TRC40"/>
    <property type="match status" value="1"/>
</dbReference>
<dbReference type="PANTHER" id="PTHR10803">
    <property type="entry name" value="ARSENICAL PUMP-DRIVING ATPASE ARSENITE-TRANSLOCATING ATPASE"/>
    <property type="match status" value="1"/>
</dbReference>
<dbReference type="PANTHER" id="PTHR10803:SF3">
    <property type="entry name" value="ATPASE GET3"/>
    <property type="match status" value="1"/>
</dbReference>
<dbReference type="Pfam" id="PF02374">
    <property type="entry name" value="ArsA_ATPase"/>
    <property type="match status" value="1"/>
</dbReference>
<dbReference type="SUPFAM" id="SSF52540">
    <property type="entry name" value="P-loop containing nucleoside triphosphate hydrolases"/>
    <property type="match status" value="1"/>
</dbReference>
<name>ASNA_DROWI</name>
<feature type="chain" id="PRO_0000388158" description="ATPase ASNA1 homolog">
    <location>
        <begin position="1"/>
        <end position="335"/>
    </location>
</feature>
<feature type="active site" evidence="1">
    <location>
        <position position="59"/>
    </location>
</feature>
<feature type="binding site" evidence="1">
    <location>
        <begin position="30"/>
        <end position="37"/>
    </location>
    <ligand>
        <name>ATP</name>
        <dbReference type="ChEBI" id="CHEBI:30616"/>
    </ligand>
</feature>
<feature type="binding site" evidence="1">
    <location>
        <position position="237"/>
    </location>
    <ligand>
        <name>ATP</name>
        <dbReference type="ChEBI" id="CHEBI:30616"/>
    </ligand>
</feature>
<feature type="binding site" evidence="1">
    <location>
        <position position="264"/>
    </location>
    <ligand>
        <name>ATP</name>
        <dbReference type="ChEBI" id="CHEBI:30616"/>
    </ligand>
</feature>
<feature type="binding site" evidence="1">
    <location>
        <position position="273"/>
    </location>
    <ligand>
        <name>Zn(2+)</name>
        <dbReference type="ChEBI" id="CHEBI:29105"/>
        <note>ligand shared between dimeric partners</note>
    </ligand>
</feature>
<feature type="binding site" evidence="1">
    <location>
        <position position="276"/>
    </location>
    <ligand>
        <name>Zn(2+)</name>
        <dbReference type="ChEBI" id="CHEBI:29105"/>
        <note>ligand shared between dimeric partners</note>
    </ligand>
</feature>
<evidence type="ECO:0000255" key="1">
    <source>
        <dbReference type="HAMAP-Rule" id="MF_03112"/>
    </source>
</evidence>
<protein>
    <recommendedName>
        <fullName evidence="1">ATPase ASNA1 homolog</fullName>
        <ecNumber evidence="1">3.6.-.-</ecNumber>
    </recommendedName>
    <alternativeName>
        <fullName evidence="1">Arsenical pump-driving ATPase homolog</fullName>
    </alternativeName>
    <alternativeName>
        <fullName evidence="1">Arsenite-stimulated ATPase</fullName>
    </alternativeName>
</protein>
<sequence length="335" mass="37403">MVDEPLEPLEPSLQNLIDQQSLKWIFVGGKGGVGKTTCSSSLAVQLAKKRDSVLIISTDPAHNISDAFDQKFTKVPTKVNGFDNLFAMEIDPNAGLNELPEEYFDGENEALRVGKGVMQEMINALPGIDEAMSYAEVMKLVKGMNFSVVVFDTAPTGHTLRLIAFPQVVEKGLGKLLRLKMKVAPILTQFVSMLGMTDVSADSLSQKLDDMLRVISQVNEQFQNPDQTTFVCVCIAEFFSLYETERLVQELTKCGIDVHNIIVNQLLYTHKSCSMCTSRFKIQEKYLDQIADLYEDFHVIKLPLLEKEVRGSDGIKAFSEHLITPYEPPATNDQK</sequence>
<comment type="function">
    <text evidence="1">ATPase required for the post-translational delivery of tail-anchored (TA) proteins to the endoplasmic reticulum. Recognizes and selectively binds the transmembrane domain of TA proteins in the cytosol. This complex then targets to the endoplasmic reticulum by membrane-bound receptors, where the tail-anchored protein is released for insertion. This process is regulated by ATP binding and hydrolysis. ATP binding drives the homodimer towards the closed dimer state, facilitating recognition of newly synthesized TA membrane proteins. ATP hydrolysis is required for insertion. Subsequently, the homodimer reverts towards the open dimer state, lowering its affinity for the membrane-bound receptor, and returning it to the cytosol to initiate a new round of targeting.</text>
</comment>
<comment type="subunit">
    <text evidence="1">Homodimer.</text>
</comment>
<comment type="subcellular location">
    <subcellularLocation>
        <location evidence="1">Cytoplasm</location>
    </subcellularLocation>
    <subcellularLocation>
        <location evidence="1">Endoplasmic reticulum</location>
    </subcellularLocation>
</comment>
<comment type="similarity">
    <text evidence="1">Belongs to the arsA ATPase family.</text>
</comment>
<proteinExistence type="inferred from homology"/>
<gene>
    <name type="ORF">GK17805</name>
</gene>
<organism>
    <name type="scientific">Drosophila willistoni</name>
    <name type="common">Fruit fly</name>
    <dbReference type="NCBI Taxonomy" id="7260"/>
    <lineage>
        <taxon>Eukaryota</taxon>
        <taxon>Metazoa</taxon>
        <taxon>Ecdysozoa</taxon>
        <taxon>Arthropoda</taxon>
        <taxon>Hexapoda</taxon>
        <taxon>Insecta</taxon>
        <taxon>Pterygota</taxon>
        <taxon>Neoptera</taxon>
        <taxon>Endopterygota</taxon>
        <taxon>Diptera</taxon>
        <taxon>Brachycera</taxon>
        <taxon>Muscomorpha</taxon>
        <taxon>Ephydroidea</taxon>
        <taxon>Drosophilidae</taxon>
        <taxon>Drosophila</taxon>
        <taxon>Sophophora</taxon>
    </lineage>
</organism>
<accession>B4N645</accession>
<keyword id="KW-0067">ATP-binding</keyword>
<keyword id="KW-0963">Cytoplasm</keyword>
<keyword id="KW-0256">Endoplasmic reticulum</keyword>
<keyword id="KW-0378">Hydrolase</keyword>
<keyword id="KW-0479">Metal-binding</keyword>
<keyword id="KW-0547">Nucleotide-binding</keyword>
<keyword id="KW-1185">Reference proteome</keyword>
<keyword id="KW-0813">Transport</keyword>
<keyword id="KW-0862">Zinc</keyword>